<comment type="catalytic activity">
    <reaction evidence="1">
        <text>tRNA(Asn) + L-asparagine + ATP = L-asparaginyl-tRNA(Asn) + AMP + diphosphate + H(+)</text>
        <dbReference type="Rhea" id="RHEA:11180"/>
        <dbReference type="Rhea" id="RHEA-COMP:9659"/>
        <dbReference type="Rhea" id="RHEA-COMP:9674"/>
        <dbReference type="ChEBI" id="CHEBI:15378"/>
        <dbReference type="ChEBI" id="CHEBI:30616"/>
        <dbReference type="ChEBI" id="CHEBI:33019"/>
        <dbReference type="ChEBI" id="CHEBI:58048"/>
        <dbReference type="ChEBI" id="CHEBI:78442"/>
        <dbReference type="ChEBI" id="CHEBI:78515"/>
        <dbReference type="ChEBI" id="CHEBI:456215"/>
        <dbReference type="EC" id="6.1.1.22"/>
    </reaction>
</comment>
<comment type="subunit">
    <text evidence="1">Homodimer.</text>
</comment>
<comment type="subcellular location">
    <subcellularLocation>
        <location evidence="1">Cytoplasm</location>
    </subcellularLocation>
</comment>
<comment type="similarity">
    <text evidence="1">Belongs to the class-II aminoacyl-tRNA synthetase family.</text>
</comment>
<proteinExistence type="inferred from homology"/>
<organism>
    <name type="scientific">Streptococcus pneumoniae (strain ATCC BAA-255 / R6)</name>
    <dbReference type="NCBI Taxonomy" id="171101"/>
    <lineage>
        <taxon>Bacteria</taxon>
        <taxon>Bacillati</taxon>
        <taxon>Bacillota</taxon>
        <taxon>Bacilli</taxon>
        <taxon>Lactobacillales</taxon>
        <taxon>Streptococcaceae</taxon>
        <taxon>Streptococcus</taxon>
    </lineage>
</organism>
<evidence type="ECO:0000255" key="1">
    <source>
        <dbReference type="HAMAP-Rule" id="MF_00534"/>
    </source>
</evidence>
<reference key="1">
    <citation type="journal article" date="2001" name="J. Bacteriol.">
        <title>Genome of the bacterium Streptococcus pneumoniae strain R6.</title>
        <authorList>
            <person name="Hoskins J."/>
            <person name="Alborn W.E. Jr."/>
            <person name="Arnold J."/>
            <person name="Blaszczak L.C."/>
            <person name="Burgett S."/>
            <person name="DeHoff B.S."/>
            <person name="Estrem S.T."/>
            <person name="Fritz L."/>
            <person name="Fu D.-J."/>
            <person name="Fuller W."/>
            <person name="Geringer C."/>
            <person name="Gilmour R."/>
            <person name="Glass J.S."/>
            <person name="Khoja H."/>
            <person name="Kraft A.R."/>
            <person name="Lagace R.E."/>
            <person name="LeBlanc D.J."/>
            <person name="Lee L.N."/>
            <person name="Lefkowitz E.J."/>
            <person name="Lu J."/>
            <person name="Matsushima P."/>
            <person name="McAhren S.M."/>
            <person name="McHenney M."/>
            <person name="McLeaster K."/>
            <person name="Mundy C.W."/>
            <person name="Nicas T.I."/>
            <person name="Norris F.H."/>
            <person name="O'Gara M."/>
            <person name="Peery R.B."/>
            <person name="Robertson G.T."/>
            <person name="Rockey P."/>
            <person name="Sun P.-M."/>
            <person name="Winkler M.E."/>
            <person name="Yang Y."/>
            <person name="Young-Bellido M."/>
            <person name="Zhao G."/>
            <person name="Zook C.A."/>
            <person name="Baltz R.H."/>
            <person name="Jaskunas S.R."/>
            <person name="Rosteck P.R. Jr."/>
            <person name="Skatrud P.L."/>
            <person name="Glass J.I."/>
        </authorList>
    </citation>
    <scope>NUCLEOTIDE SEQUENCE [LARGE SCALE GENOMIC DNA]</scope>
    <source>
        <strain>ATCC BAA-255 / R6</strain>
    </source>
</reference>
<feature type="chain" id="PRO_0000176461" description="Asparagine--tRNA ligase">
    <location>
        <begin position="1"/>
        <end position="447"/>
    </location>
</feature>
<keyword id="KW-0030">Aminoacyl-tRNA synthetase</keyword>
<keyword id="KW-0067">ATP-binding</keyword>
<keyword id="KW-0963">Cytoplasm</keyword>
<keyword id="KW-0436">Ligase</keyword>
<keyword id="KW-0547">Nucleotide-binding</keyword>
<keyword id="KW-0648">Protein biosynthesis</keyword>
<keyword id="KW-1185">Reference proteome</keyword>
<sequence>MTKRVTIIDVKDYVGQEVTIGAWVANKSGKGKIAFLQLRDGTAFFQGVAFKPNFVEKFGEEVGLEKFDVIKRLSQETSVYVTGIVKEDERSKFGYELDITDIEVIGESQDYPITPKEHGTDFLMDNRHLWLRSRKQVAVLQIRNAIIYVTYEFFDKNGFMKFDSPILSGNAAEDSTELFETDYFGTPAYLSQSGQLYLEAGAMALGRVFDFGPVFRAEKSKTRRHLTEFWMMDAEYSYLTHDESLDLQEAYVKALLQGVLDRAPQALETLERDTELLKRYIAEPFKRITYDQAIDLLQEHENDEDADYEHLEHGDDFGSPHETWISNHFGVPTFVMNYPAAIKAFYMKPVPGNPERVLCADLLAPEGYGEIIGGSMREEDYDALVAKMDELGMDRTEYEFYLDLRKYGTVPHGGFGIGIERMVTFAAGTKHIREAIPFPRMLHRIKP</sequence>
<protein>
    <recommendedName>
        <fullName evidence="1">Asparagine--tRNA ligase</fullName>
        <ecNumber evidence="1">6.1.1.22</ecNumber>
    </recommendedName>
    <alternativeName>
        <fullName evidence="1">Asparaginyl-tRNA synthetase</fullName>
        <shortName evidence="1">AsnRS</shortName>
    </alternativeName>
</protein>
<accession>Q8CWQ4</accession>
<gene>
    <name evidence="1" type="primary">asnS</name>
    <name type="ordered locus">spr1397</name>
</gene>
<name>SYN_STRR6</name>
<dbReference type="EC" id="6.1.1.22" evidence="1"/>
<dbReference type="EMBL" id="AE007317">
    <property type="protein sequence ID" value="AAL00201.1"/>
    <property type="molecule type" value="Genomic_DNA"/>
</dbReference>
<dbReference type="PIR" id="D98046">
    <property type="entry name" value="D98046"/>
</dbReference>
<dbReference type="RefSeq" id="NP_358990.1">
    <property type="nucleotide sequence ID" value="NC_003098.1"/>
</dbReference>
<dbReference type="RefSeq" id="WP_000167154.1">
    <property type="nucleotide sequence ID" value="NC_003098.1"/>
</dbReference>
<dbReference type="SMR" id="Q8CWQ4"/>
<dbReference type="STRING" id="171101.spr1397"/>
<dbReference type="KEGG" id="spr:spr1397"/>
<dbReference type="PATRIC" id="fig|171101.6.peg.1512"/>
<dbReference type="eggNOG" id="COG0017">
    <property type="taxonomic scope" value="Bacteria"/>
</dbReference>
<dbReference type="HOGENOM" id="CLU_004553_2_0_9"/>
<dbReference type="Proteomes" id="UP000000586">
    <property type="component" value="Chromosome"/>
</dbReference>
<dbReference type="GO" id="GO:0005737">
    <property type="term" value="C:cytoplasm"/>
    <property type="evidence" value="ECO:0007669"/>
    <property type="project" value="UniProtKB-SubCell"/>
</dbReference>
<dbReference type="GO" id="GO:0004816">
    <property type="term" value="F:asparagine-tRNA ligase activity"/>
    <property type="evidence" value="ECO:0007669"/>
    <property type="project" value="UniProtKB-UniRule"/>
</dbReference>
<dbReference type="GO" id="GO:0005524">
    <property type="term" value="F:ATP binding"/>
    <property type="evidence" value="ECO:0007669"/>
    <property type="project" value="UniProtKB-UniRule"/>
</dbReference>
<dbReference type="GO" id="GO:0140096">
    <property type="term" value="F:catalytic activity, acting on a protein"/>
    <property type="evidence" value="ECO:0007669"/>
    <property type="project" value="UniProtKB-ARBA"/>
</dbReference>
<dbReference type="GO" id="GO:0003676">
    <property type="term" value="F:nucleic acid binding"/>
    <property type="evidence" value="ECO:0007669"/>
    <property type="project" value="InterPro"/>
</dbReference>
<dbReference type="GO" id="GO:0016740">
    <property type="term" value="F:transferase activity"/>
    <property type="evidence" value="ECO:0007669"/>
    <property type="project" value="UniProtKB-ARBA"/>
</dbReference>
<dbReference type="GO" id="GO:0006421">
    <property type="term" value="P:asparaginyl-tRNA aminoacylation"/>
    <property type="evidence" value="ECO:0000318"/>
    <property type="project" value="GO_Central"/>
</dbReference>
<dbReference type="CDD" id="cd04323">
    <property type="entry name" value="AsnRS_cyto_like_N"/>
    <property type="match status" value="1"/>
</dbReference>
<dbReference type="CDD" id="cd00776">
    <property type="entry name" value="AsxRS_core"/>
    <property type="match status" value="1"/>
</dbReference>
<dbReference type="Gene3D" id="3.30.930.10">
    <property type="entry name" value="Bira Bifunctional Protein, Domain 2"/>
    <property type="match status" value="1"/>
</dbReference>
<dbReference type="Gene3D" id="2.40.50.140">
    <property type="entry name" value="Nucleic acid-binding proteins"/>
    <property type="match status" value="1"/>
</dbReference>
<dbReference type="HAMAP" id="MF_00534">
    <property type="entry name" value="Asn_tRNA_synth"/>
    <property type="match status" value="1"/>
</dbReference>
<dbReference type="InterPro" id="IPR004364">
    <property type="entry name" value="Aa-tRNA-synt_II"/>
</dbReference>
<dbReference type="InterPro" id="IPR006195">
    <property type="entry name" value="aa-tRNA-synth_II"/>
</dbReference>
<dbReference type="InterPro" id="IPR045864">
    <property type="entry name" value="aa-tRNA-synth_II/BPL/LPL"/>
</dbReference>
<dbReference type="InterPro" id="IPR004522">
    <property type="entry name" value="Asn-tRNA-ligase"/>
</dbReference>
<dbReference type="InterPro" id="IPR002312">
    <property type="entry name" value="Asp/Asn-tRNA-synth_IIb"/>
</dbReference>
<dbReference type="InterPro" id="IPR012340">
    <property type="entry name" value="NA-bd_OB-fold"/>
</dbReference>
<dbReference type="InterPro" id="IPR004365">
    <property type="entry name" value="NA-bd_OB_tRNA"/>
</dbReference>
<dbReference type="NCBIfam" id="TIGR00457">
    <property type="entry name" value="asnS"/>
    <property type="match status" value="1"/>
</dbReference>
<dbReference type="NCBIfam" id="NF003037">
    <property type="entry name" value="PRK03932.1"/>
    <property type="match status" value="1"/>
</dbReference>
<dbReference type="PANTHER" id="PTHR22594:SF34">
    <property type="entry name" value="ASPARAGINE--TRNA LIGASE, MITOCHONDRIAL-RELATED"/>
    <property type="match status" value="1"/>
</dbReference>
<dbReference type="PANTHER" id="PTHR22594">
    <property type="entry name" value="ASPARTYL/LYSYL-TRNA SYNTHETASE"/>
    <property type="match status" value="1"/>
</dbReference>
<dbReference type="Pfam" id="PF00152">
    <property type="entry name" value="tRNA-synt_2"/>
    <property type="match status" value="1"/>
</dbReference>
<dbReference type="Pfam" id="PF01336">
    <property type="entry name" value="tRNA_anti-codon"/>
    <property type="match status" value="1"/>
</dbReference>
<dbReference type="PRINTS" id="PR01042">
    <property type="entry name" value="TRNASYNTHASP"/>
</dbReference>
<dbReference type="SUPFAM" id="SSF55681">
    <property type="entry name" value="Class II aaRS and biotin synthetases"/>
    <property type="match status" value="1"/>
</dbReference>
<dbReference type="SUPFAM" id="SSF50249">
    <property type="entry name" value="Nucleic acid-binding proteins"/>
    <property type="match status" value="1"/>
</dbReference>
<dbReference type="PROSITE" id="PS50862">
    <property type="entry name" value="AA_TRNA_LIGASE_II"/>
    <property type="match status" value="1"/>
</dbReference>